<proteinExistence type="inferred from homology"/>
<keyword id="KW-0963">Cytoplasm</keyword>
<keyword id="KW-0448">Lipopolysaccharide biosynthesis</keyword>
<keyword id="KW-0548">Nucleotidyltransferase</keyword>
<keyword id="KW-0808">Transferase</keyword>
<evidence type="ECO:0000255" key="1">
    <source>
        <dbReference type="HAMAP-Rule" id="MF_00057"/>
    </source>
</evidence>
<dbReference type="EC" id="2.7.7.38" evidence="1"/>
<dbReference type="EMBL" id="AM260522">
    <property type="protein sequence ID" value="CAJ99149.1"/>
    <property type="molecule type" value="Genomic_DNA"/>
</dbReference>
<dbReference type="RefSeq" id="WP_011577264.1">
    <property type="nucleotide sequence ID" value="NC_008229.1"/>
</dbReference>
<dbReference type="SMR" id="Q17YX7"/>
<dbReference type="STRING" id="382638.Hac_0307"/>
<dbReference type="GeneID" id="31757823"/>
<dbReference type="KEGG" id="hac:Hac_0307"/>
<dbReference type="eggNOG" id="COG1212">
    <property type="taxonomic scope" value="Bacteria"/>
</dbReference>
<dbReference type="HOGENOM" id="CLU_065038_0_1_7"/>
<dbReference type="OrthoDB" id="9815559at2"/>
<dbReference type="BioCyc" id="HACI382638:HAC_RS01385-MONOMER"/>
<dbReference type="UniPathway" id="UPA00030"/>
<dbReference type="UniPathway" id="UPA00358">
    <property type="reaction ID" value="UER00476"/>
</dbReference>
<dbReference type="Proteomes" id="UP000000775">
    <property type="component" value="Chromosome"/>
</dbReference>
<dbReference type="GO" id="GO:0005829">
    <property type="term" value="C:cytosol"/>
    <property type="evidence" value="ECO:0007669"/>
    <property type="project" value="TreeGrafter"/>
</dbReference>
<dbReference type="GO" id="GO:0008690">
    <property type="term" value="F:3-deoxy-manno-octulosonate cytidylyltransferase activity"/>
    <property type="evidence" value="ECO:0007669"/>
    <property type="project" value="UniProtKB-UniRule"/>
</dbReference>
<dbReference type="GO" id="GO:0033468">
    <property type="term" value="P:CMP-keto-3-deoxy-D-manno-octulosonic acid biosynthetic process"/>
    <property type="evidence" value="ECO:0007669"/>
    <property type="project" value="UniProtKB-UniRule"/>
</dbReference>
<dbReference type="GO" id="GO:0009103">
    <property type="term" value="P:lipopolysaccharide biosynthetic process"/>
    <property type="evidence" value="ECO:0007669"/>
    <property type="project" value="UniProtKB-UniRule"/>
</dbReference>
<dbReference type="CDD" id="cd02517">
    <property type="entry name" value="CMP-KDO-Synthetase"/>
    <property type="match status" value="1"/>
</dbReference>
<dbReference type="Gene3D" id="3.90.550.10">
    <property type="entry name" value="Spore Coat Polysaccharide Biosynthesis Protein SpsA, Chain A"/>
    <property type="match status" value="1"/>
</dbReference>
<dbReference type="HAMAP" id="MF_00057">
    <property type="entry name" value="KdsB"/>
    <property type="match status" value="1"/>
</dbReference>
<dbReference type="InterPro" id="IPR003329">
    <property type="entry name" value="Cytidylyl_trans"/>
</dbReference>
<dbReference type="InterPro" id="IPR004528">
    <property type="entry name" value="KdsB"/>
</dbReference>
<dbReference type="InterPro" id="IPR029044">
    <property type="entry name" value="Nucleotide-diphossugar_trans"/>
</dbReference>
<dbReference type="NCBIfam" id="TIGR00466">
    <property type="entry name" value="kdsB"/>
    <property type="match status" value="1"/>
</dbReference>
<dbReference type="NCBIfam" id="NF003952">
    <property type="entry name" value="PRK05450.1-5"/>
    <property type="match status" value="1"/>
</dbReference>
<dbReference type="PANTHER" id="PTHR42866">
    <property type="entry name" value="3-DEOXY-MANNO-OCTULOSONATE CYTIDYLYLTRANSFERASE"/>
    <property type="match status" value="1"/>
</dbReference>
<dbReference type="PANTHER" id="PTHR42866:SF2">
    <property type="entry name" value="3-DEOXY-MANNO-OCTULOSONATE CYTIDYLYLTRANSFERASE, MITOCHONDRIAL"/>
    <property type="match status" value="1"/>
</dbReference>
<dbReference type="Pfam" id="PF02348">
    <property type="entry name" value="CTP_transf_3"/>
    <property type="match status" value="1"/>
</dbReference>
<dbReference type="SUPFAM" id="SSF53448">
    <property type="entry name" value="Nucleotide-diphospho-sugar transferases"/>
    <property type="match status" value="1"/>
</dbReference>
<sequence length="243" mass="27508">MIIIPARLKSSRFENKVLECIFGLPMVVRCAKNASLVDECVVACDDESIMEVCQKFHIKAVMTSKHHNSGTERCLEAAQLLGLKNDERVLNLQGDEPFLEKEVIAMLLEATKNAPFMATCAKVIDKEKAKNPNLVKVVLDHQNNALYFSRSLIPFLRDFDLKRPTPLLGHIGIYGFHNREILEELCSLKPCVLEEIEKLEQLRALYYQKNILVKIVQSESVGIDTKEDLQNALKIFNSLPTTP</sequence>
<feature type="chain" id="PRO_1000003364" description="3-deoxy-manno-octulosonate cytidylyltransferase">
    <location>
        <begin position="1"/>
        <end position="243"/>
    </location>
</feature>
<reference key="1">
    <citation type="journal article" date="2006" name="PLoS Genet.">
        <title>Who ate whom? Adaptive Helicobacter genomic changes that accompanied a host jump from early humans to large felines.</title>
        <authorList>
            <person name="Eppinger M."/>
            <person name="Baar C."/>
            <person name="Linz B."/>
            <person name="Raddatz G."/>
            <person name="Lanz C."/>
            <person name="Keller H."/>
            <person name="Morelli G."/>
            <person name="Gressmann H."/>
            <person name="Achtman M."/>
            <person name="Schuster S.C."/>
        </authorList>
    </citation>
    <scope>NUCLEOTIDE SEQUENCE [LARGE SCALE GENOMIC DNA]</scope>
    <source>
        <strain>Sheeba</strain>
    </source>
</reference>
<name>KDSB_HELAH</name>
<gene>
    <name evidence="1" type="primary">kdsB</name>
    <name type="ordered locus">Hac_0307</name>
</gene>
<comment type="function">
    <text evidence="1">Activates KDO (a required 8-carbon sugar) for incorporation into bacterial lipopolysaccharide in Gram-negative bacteria.</text>
</comment>
<comment type="catalytic activity">
    <reaction evidence="1">
        <text>3-deoxy-alpha-D-manno-oct-2-ulosonate + CTP = CMP-3-deoxy-beta-D-manno-octulosonate + diphosphate</text>
        <dbReference type="Rhea" id="RHEA:23448"/>
        <dbReference type="ChEBI" id="CHEBI:33019"/>
        <dbReference type="ChEBI" id="CHEBI:37563"/>
        <dbReference type="ChEBI" id="CHEBI:85986"/>
        <dbReference type="ChEBI" id="CHEBI:85987"/>
        <dbReference type="EC" id="2.7.7.38"/>
    </reaction>
</comment>
<comment type="pathway">
    <text evidence="1">Nucleotide-sugar biosynthesis; CMP-3-deoxy-D-manno-octulosonate biosynthesis; CMP-3-deoxy-D-manno-octulosonate from 3-deoxy-D-manno-octulosonate and CTP: step 1/1.</text>
</comment>
<comment type="pathway">
    <text evidence="1">Bacterial outer membrane biogenesis; lipopolysaccharide biosynthesis.</text>
</comment>
<comment type="subcellular location">
    <subcellularLocation>
        <location evidence="1">Cytoplasm</location>
    </subcellularLocation>
</comment>
<comment type="similarity">
    <text evidence="1">Belongs to the KdsB family.</text>
</comment>
<organism>
    <name type="scientific">Helicobacter acinonychis (strain Sheeba)</name>
    <dbReference type="NCBI Taxonomy" id="382638"/>
    <lineage>
        <taxon>Bacteria</taxon>
        <taxon>Pseudomonadati</taxon>
        <taxon>Campylobacterota</taxon>
        <taxon>Epsilonproteobacteria</taxon>
        <taxon>Campylobacterales</taxon>
        <taxon>Helicobacteraceae</taxon>
        <taxon>Helicobacter</taxon>
    </lineage>
</organism>
<accession>Q17YX7</accession>
<protein>
    <recommendedName>
        <fullName evidence="1">3-deoxy-manno-octulosonate cytidylyltransferase</fullName>
        <ecNumber evidence="1">2.7.7.38</ecNumber>
    </recommendedName>
    <alternativeName>
        <fullName evidence="1">CMP-2-keto-3-deoxyoctulosonic acid synthase</fullName>
        <shortName evidence="1">CKS</shortName>
        <shortName evidence="1">CMP-KDO synthase</shortName>
    </alternativeName>
</protein>